<dbReference type="EMBL" id="CP000264">
    <property type="protein sequence ID" value="ABD56572.1"/>
    <property type="molecule type" value="Genomic_DNA"/>
</dbReference>
<dbReference type="RefSeq" id="WP_011456772.1">
    <property type="nucleotide sequence ID" value="NC_007802.1"/>
</dbReference>
<dbReference type="SMR" id="Q28L40"/>
<dbReference type="STRING" id="290400.Jann_3655"/>
<dbReference type="KEGG" id="jan:Jann_3655"/>
<dbReference type="eggNOG" id="COG3004">
    <property type="taxonomic scope" value="Bacteria"/>
</dbReference>
<dbReference type="HOGENOM" id="CLU_015803_1_2_5"/>
<dbReference type="OrthoDB" id="9808135at2"/>
<dbReference type="Proteomes" id="UP000008326">
    <property type="component" value="Chromosome"/>
</dbReference>
<dbReference type="GO" id="GO:0005886">
    <property type="term" value="C:plasma membrane"/>
    <property type="evidence" value="ECO:0007669"/>
    <property type="project" value="UniProtKB-SubCell"/>
</dbReference>
<dbReference type="GO" id="GO:0015385">
    <property type="term" value="F:sodium:proton antiporter activity"/>
    <property type="evidence" value="ECO:0007669"/>
    <property type="project" value="TreeGrafter"/>
</dbReference>
<dbReference type="GO" id="GO:0006885">
    <property type="term" value="P:regulation of pH"/>
    <property type="evidence" value="ECO:0007669"/>
    <property type="project" value="InterPro"/>
</dbReference>
<dbReference type="Gene3D" id="1.20.1530.10">
    <property type="entry name" value="Na+/H+ antiporter like domain"/>
    <property type="match status" value="1"/>
</dbReference>
<dbReference type="HAMAP" id="MF_01844">
    <property type="entry name" value="NhaA"/>
    <property type="match status" value="1"/>
</dbReference>
<dbReference type="InterPro" id="IPR023171">
    <property type="entry name" value="Na/H_antiporter_dom_sf"/>
</dbReference>
<dbReference type="InterPro" id="IPR004670">
    <property type="entry name" value="NhaA"/>
</dbReference>
<dbReference type="PANTHER" id="PTHR30341:SF0">
    <property type="entry name" value="NA(+)_H(+) ANTIPORTER NHAA"/>
    <property type="match status" value="1"/>
</dbReference>
<dbReference type="PANTHER" id="PTHR30341">
    <property type="entry name" value="SODIUM ION/PROTON ANTIPORTER NHAA-RELATED"/>
    <property type="match status" value="1"/>
</dbReference>
<dbReference type="Pfam" id="PF06965">
    <property type="entry name" value="Na_H_antiport_1"/>
    <property type="match status" value="1"/>
</dbReference>
<gene>
    <name evidence="1" type="primary">nhaA</name>
    <name type="ordered locus">Jann_3655</name>
</gene>
<evidence type="ECO:0000255" key="1">
    <source>
        <dbReference type="HAMAP-Rule" id="MF_01844"/>
    </source>
</evidence>
<keyword id="KW-0050">Antiport</keyword>
<keyword id="KW-0997">Cell inner membrane</keyword>
<keyword id="KW-1003">Cell membrane</keyword>
<keyword id="KW-0406">Ion transport</keyword>
<keyword id="KW-0472">Membrane</keyword>
<keyword id="KW-1185">Reference proteome</keyword>
<keyword id="KW-0915">Sodium</keyword>
<keyword id="KW-0739">Sodium transport</keyword>
<keyword id="KW-0812">Transmembrane</keyword>
<keyword id="KW-1133">Transmembrane helix</keyword>
<keyword id="KW-0813">Transport</keyword>
<feature type="chain" id="PRO_0000334323" description="Na(+)/H(+) antiporter NhaA">
    <location>
        <begin position="1"/>
        <end position="420"/>
    </location>
</feature>
<feature type="transmembrane region" description="Helical" evidence="1">
    <location>
        <begin position="4"/>
        <end position="24"/>
    </location>
</feature>
<feature type="transmembrane region" description="Helical" evidence="1">
    <location>
        <begin position="70"/>
        <end position="90"/>
    </location>
</feature>
<feature type="transmembrane region" description="Helical" evidence="1">
    <location>
        <begin position="104"/>
        <end position="124"/>
    </location>
</feature>
<feature type="transmembrane region" description="Helical" evidence="1">
    <location>
        <begin position="132"/>
        <end position="152"/>
    </location>
</feature>
<feature type="transmembrane region" description="Helical" evidence="1">
    <location>
        <begin position="165"/>
        <end position="185"/>
    </location>
</feature>
<feature type="transmembrane region" description="Helical" evidence="1">
    <location>
        <begin position="192"/>
        <end position="212"/>
    </location>
</feature>
<feature type="transmembrane region" description="Helical" evidence="1">
    <location>
        <begin position="233"/>
        <end position="250"/>
    </location>
</feature>
<feature type="transmembrane region" description="Helical" evidence="1">
    <location>
        <begin position="299"/>
        <end position="319"/>
    </location>
</feature>
<feature type="transmembrane region" description="Helical" evidence="1">
    <location>
        <begin position="323"/>
        <end position="343"/>
    </location>
</feature>
<feature type="transmembrane region" description="Helical" evidence="1">
    <location>
        <begin position="361"/>
        <end position="381"/>
    </location>
</feature>
<feature type="transmembrane region" description="Helical" evidence="1">
    <location>
        <begin position="395"/>
        <end position="415"/>
    </location>
</feature>
<name>NHAA_JANSC</name>
<proteinExistence type="inferred from homology"/>
<sequence length="420" mass="45145">MYRVWNFITGYSLLLIGGAIIALIWANIDINSYHHFTEVVIWADAPIGHLHDDGHGHVVRDLTLHYLVNDLLMALFFAIAAKEVWEAVILKNGSLRGKKAATPLVATLGGMVGPISIYLGIAYFLGSTTFDAVANGWAIPTATDIAFSYLVGRLVFGAGHPAVRFLLLLAIADDAAGLLILAIFYPSGELAPAWLLLSFGAALGVYVLANWLPRRLDRGDQLRRRSSWMRQKLSFWPYALAGCASWYGFMQSGLHPALGLLPIVLTIPHADRAFGIFSAAEVHLHDLLNTMEHALKYPVEIILGLFGLMNAGVAFSAMGEATWLVLAGLLIGKPVGIFLFGWLAAKPLGLGLPQGMRMIDLVVIGCVAAIGFTVSLFVASVAFEPGPVQDAAKMGALFSFGAAAVSIIVGKLTQVQKQEI</sequence>
<protein>
    <recommendedName>
        <fullName evidence="1">Na(+)/H(+) antiporter NhaA</fullName>
    </recommendedName>
    <alternativeName>
        <fullName evidence="1">Sodium/proton antiporter NhaA</fullName>
    </alternativeName>
</protein>
<comment type="function">
    <text evidence="1">Na(+)/H(+) antiporter that extrudes sodium in exchange for external protons.</text>
</comment>
<comment type="catalytic activity">
    <reaction evidence="1">
        <text>Na(+)(in) + 2 H(+)(out) = Na(+)(out) + 2 H(+)(in)</text>
        <dbReference type="Rhea" id="RHEA:29251"/>
        <dbReference type="ChEBI" id="CHEBI:15378"/>
        <dbReference type="ChEBI" id="CHEBI:29101"/>
    </reaction>
    <physiologicalReaction direction="left-to-right" evidence="1">
        <dbReference type="Rhea" id="RHEA:29252"/>
    </physiologicalReaction>
</comment>
<comment type="subcellular location">
    <subcellularLocation>
        <location evidence="1">Cell inner membrane</location>
        <topology evidence="1">Multi-pass membrane protein</topology>
    </subcellularLocation>
</comment>
<comment type="similarity">
    <text evidence="1">Belongs to the NhaA Na(+)/H(+) (TC 2.A.33) antiporter family.</text>
</comment>
<organism>
    <name type="scientific">Jannaschia sp. (strain CCS1)</name>
    <dbReference type="NCBI Taxonomy" id="290400"/>
    <lineage>
        <taxon>Bacteria</taxon>
        <taxon>Pseudomonadati</taxon>
        <taxon>Pseudomonadota</taxon>
        <taxon>Alphaproteobacteria</taxon>
        <taxon>Rhodobacterales</taxon>
        <taxon>Roseobacteraceae</taxon>
        <taxon>Jannaschia</taxon>
    </lineage>
</organism>
<reference key="1">
    <citation type="submission" date="2006-02" db="EMBL/GenBank/DDBJ databases">
        <title>Complete sequence of chromosome of Jannaschia sp. CCS1.</title>
        <authorList>
            <consortium name="US DOE Joint Genome Institute"/>
            <person name="Copeland A."/>
            <person name="Lucas S."/>
            <person name="Lapidus A."/>
            <person name="Barry K."/>
            <person name="Detter J.C."/>
            <person name="Glavina del Rio T."/>
            <person name="Hammon N."/>
            <person name="Israni S."/>
            <person name="Pitluck S."/>
            <person name="Brettin T."/>
            <person name="Bruce D."/>
            <person name="Han C."/>
            <person name="Tapia R."/>
            <person name="Gilna P."/>
            <person name="Chertkov O."/>
            <person name="Saunders E."/>
            <person name="Schmutz J."/>
            <person name="Larimer F."/>
            <person name="Land M."/>
            <person name="Kyrpides N."/>
            <person name="Lykidis A."/>
            <person name="Moran M.A."/>
            <person name="Belas R."/>
            <person name="Ye W."/>
            <person name="Buchan A."/>
            <person name="Gonzalez J.M."/>
            <person name="Schell M.A."/>
            <person name="Richardson P."/>
        </authorList>
    </citation>
    <scope>NUCLEOTIDE SEQUENCE [LARGE SCALE GENOMIC DNA]</scope>
    <source>
        <strain>CCS1</strain>
    </source>
</reference>
<accession>Q28L40</accession>